<feature type="signal peptide" evidence="1">
    <location>
        <begin position="1"/>
        <end position="19"/>
    </location>
</feature>
<feature type="chain" id="PRO_5000067540" description="Protein TsetseEP">
    <location>
        <begin position="20"/>
        <end position="320"/>
    </location>
</feature>
<feature type="region of interest" description="Disordered" evidence="2">
    <location>
        <begin position="192"/>
        <end position="320"/>
    </location>
</feature>
<feature type="region of interest" description="59 X 2 AA tandem repeats of P-E">
    <location>
        <begin position="194"/>
        <end position="311"/>
    </location>
</feature>
<feature type="compositionally biased region" description="Acidic residues" evidence="2">
    <location>
        <begin position="194"/>
        <end position="308"/>
    </location>
</feature>
<evidence type="ECO:0000255" key="1"/>
<evidence type="ECO:0000256" key="2">
    <source>
        <dbReference type="SAM" id="MobiDB-lite"/>
    </source>
</evidence>
<evidence type="ECO:0000269" key="3">
    <source>
    </source>
</evidence>
<evidence type="ECO:0000305" key="4"/>
<name>TSEP_GLOMM</name>
<keyword id="KW-0677">Repeat</keyword>
<keyword id="KW-0964">Secreted</keyword>
<keyword id="KW-0732">Signal</keyword>
<proteinExistence type="evidence at protein level"/>
<accession>Q95P09</accession>
<dbReference type="EMBL" id="AJ313389">
    <property type="protein sequence ID" value="CAC86027.1"/>
    <property type="molecule type" value="mRNA"/>
</dbReference>
<dbReference type="STRING" id="37546.Q95P09"/>
<dbReference type="Proteomes" id="UP000092444">
    <property type="component" value="Unassembled WGS sequence"/>
</dbReference>
<dbReference type="GO" id="GO:0005576">
    <property type="term" value="C:extracellular region"/>
    <property type="evidence" value="ECO:0007669"/>
    <property type="project" value="UniProtKB-SubCell"/>
</dbReference>
<dbReference type="InterPro" id="IPR050972">
    <property type="entry name" value="SDr-like"/>
</dbReference>
<dbReference type="InterPro" id="IPR007931">
    <property type="entry name" value="TsetseEP"/>
</dbReference>
<dbReference type="PANTHER" id="PTHR34403:SF14">
    <property type="entry name" value="OS05G0225800 PROTEIN"/>
    <property type="match status" value="1"/>
</dbReference>
<dbReference type="PANTHER" id="PTHR34403">
    <property type="entry name" value="TOL-PAL SYSTEM PROTEIN TOLA"/>
    <property type="match status" value="1"/>
</dbReference>
<dbReference type="Pfam" id="PF05267">
    <property type="entry name" value="DUF725"/>
    <property type="match status" value="1"/>
</dbReference>
<reference key="1">
    <citation type="journal article" date="2004" name="Insect Biochem. Mol. Biol.">
        <title>TsetseEP, a gut protein from the tsetse Glossina morsitans, is related to a major surface glycoprotein of trypanosomes transmitted by the fly and to the products of a Drosophila gene family.</title>
        <authorList>
            <person name="Chandra M."/>
            <person name="Liniger M."/>
            <person name="Tetley L."/>
            <person name="Roditi I."/>
            <person name="Barry J.D."/>
        </authorList>
    </citation>
    <scope>NUCLEOTIDE SEQUENCE [MRNA]</scope>
    <scope>TISSUE SPECIFICITY</scope>
</reference>
<sequence>MKFFISFAFLCLVLSCVAALSPDQVESRLKSYVENRSFALLRSGRVARAGTNTVQCYDKYVPLIRQAAAEGKFASDKCAQEGQNAREEETKKSEVIRESLNVKVASIEKGLGACVAKYDVLEYFTCLRDHASESQTAAGEVGKTSAVIVEGLNIVLTNIELREKYCIDQAFEQAQEKSDILFTELENCLIEGLPEPEPEPEPEPEPEPEPEPEPEPEPEPEPEPEPEPEPEPEPEPEPEPEPEPEPEPEPEPEPEPEPEPEPEPEPEPEPEPEPEPEPEPEPEPEPEPEPEPEPEPEPEPEPEPEPQPEPESKPNSLFNF</sequence>
<protein>
    <recommendedName>
        <fullName>Protein TsetseEP</fullName>
    </recommendedName>
    <alternativeName>
        <fullName>EP-repeat protein</fullName>
    </alternativeName>
</protein>
<comment type="subcellular location">
    <subcellularLocation>
        <location evidence="4">Secreted</location>
    </subcellularLocation>
</comment>
<comment type="tissue specificity">
    <text evidence="3">Expressed in the gut, but not salivary glands, of female and male flies (at protein level). Present in vesicles in midgut cells and in the lumen of the gut.</text>
</comment>
<organism>
    <name type="scientific">Glossina morsitans morsitans</name>
    <name type="common">Savannah tsetse fly</name>
    <dbReference type="NCBI Taxonomy" id="37546"/>
    <lineage>
        <taxon>Eukaryota</taxon>
        <taxon>Metazoa</taxon>
        <taxon>Ecdysozoa</taxon>
        <taxon>Arthropoda</taxon>
        <taxon>Hexapoda</taxon>
        <taxon>Insecta</taxon>
        <taxon>Pterygota</taxon>
        <taxon>Neoptera</taxon>
        <taxon>Endopterygota</taxon>
        <taxon>Diptera</taxon>
        <taxon>Brachycera</taxon>
        <taxon>Muscomorpha</taxon>
        <taxon>Hippoboscoidea</taxon>
        <taxon>Glossinidae</taxon>
        <taxon>Glossina</taxon>
    </lineage>
</organism>